<accession>A8F0M4</accession>
<protein>
    <recommendedName>
        <fullName evidence="1">Crossover junction endodeoxyribonuclease RuvC</fullName>
        <ecNumber evidence="1">3.1.21.10</ecNumber>
    </recommendedName>
    <alternativeName>
        <fullName evidence="1">Holliday junction nuclease RuvC</fullName>
    </alternativeName>
    <alternativeName>
        <fullName evidence="1">Holliday junction resolvase RuvC</fullName>
    </alternativeName>
</protein>
<evidence type="ECO:0000255" key="1">
    <source>
        <dbReference type="HAMAP-Rule" id="MF_00034"/>
    </source>
</evidence>
<evidence type="ECO:0000305" key="2"/>
<dbReference type="EC" id="3.1.21.10" evidence="1"/>
<dbReference type="EMBL" id="CP000683">
    <property type="protein sequence ID" value="ABV84460.1"/>
    <property type="status" value="ALT_INIT"/>
    <property type="molecule type" value="Genomic_DNA"/>
</dbReference>
<dbReference type="RefSeq" id="WP_041404494.1">
    <property type="nucleotide sequence ID" value="NC_009900.1"/>
</dbReference>
<dbReference type="SMR" id="A8F0M4"/>
<dbReference type="KEGG" id="rms:RMA_0166"/>
<dbReference type="HOGENOM" id="CLU_091257_1_0_5"/>
<dbReference type="Proteomes" id="UP000001311">
    <property type="component" value="Chromosome"/>
</dbReference>
<dbReference type="GO" id="GO:0005737">
    <property type="term" value="C:cytoplasm"/>
    <property type="evidence" value="ECO:0007669"/>
    <property type="project" value="UniProtKB-SubCell"/>
</dbReference>
<dbReference type="GO" id="GO:0048476">
    <property type="term" value="C:Holliday junction resolvase complex"/>
    <property type="evidence" value="ECO:0007669"/>
    <property type="project" value="UniProtKB-UniRule"/>
</dbReference>
<dbReference type="GO" id="GO:0008821">
    <property type="term" value="F:crossover junction DNA endonuclease activity"/>
    <property type="evidence" value="ECO:0007669"/>
    <property type="project" value="UniProtKB-UniRule"/>
</dbReference>
<dbReference type="GO" id="GO:0003677">
    <property type="term" value="F:DNA binding"/>
    <property type="evidence" value="ECO:0007669"/>
    <property type="project" value="UniProtKB-KW"/>
</dbReference>
<dbReference type="GO" id="GO:0000287">
    <property type="term" value="F:magnesium ion binding"/>
    <property type="evidence" value="ECO:0007669"/>
    <property type="project" value="UniProtKB-UniRule"/>
</dbReference>
<dbReference type="GO" id="GO:0006310">
    <property type="term" value="P:DNA recombination"/>
    <property type="evidence" value="ECO:0007669"/>
    <property type="project" value="UniProtKB-UniRule"/>
</dbReference>
<dbReference type="GO" id="GO:0006281">
    <property type="term" value="P:DNA repair"/>
    <property type="evidence" value="ECO:0007669"/>
    <property type="project" value="UniProtKB-UniRule"/>
</dbReference>
<dbReference type="CDD" id="cd16962">
    <property type="entry name" value="RuvC"/>
    <property type="match status" value="1"/>
</dbReference>
<dbReference type="FunFam" id="3.30.420.10:FF:000002">
    <property type="entry name" value="Crossover junction endodeoxyribonuclease RuvC"/>
    <property type="match status" value="1"/>
</dbReference>
<dbReference type="Gene3D" id="3.30.420.10">
    <property type="entry name" value="Ribonuclease H-like superfamily/Ribonuclease H"/>
    <property type="match status" value="1"/>
</dbReference>
<dbReference type="HAMAP" id="MF_00034">
    <property type="entry name" value="RuvC"/>
    <property type="match status" value="1"/>
</dbReference>
<dbReference type="InterPro" id="IPR012337">
    <property type="entry name" value="RNaseH-like_sf"/>
</dbReference>
<dbReference type="InterPro" id="IPR036397">
    <property type="entry name" value="RNaseH_sf"/>
</dbReference>
<dbReference type="InterPro" id="IPR020563">
    <property type="entry name" value="X-over_junc_endoDNase_Mg_BS"/>
</dbReference>
<dbReference type="InterPro" id="IPR002176">
    <property type="entry name" value="X-over_junc_endoDNase_RuvC"/>
</dbReference>
<dbReference type="NCBIfam" id="TIGR00228">
    <property type="entry name" value="ruvC"/>
    <property type="match status" value="1"/>
</dbReference>
<dbReference type="PANTHER" id="PTHR30194">
    <property type="entry name" value="CROSSOVER JUNCTION ENDODEOXYRIBONUCLEASE RUVC"/>
    <property type="match status" value="1"/>
</dbReference>
<dbReference type="PANTHER" id="PTHR30194:SF3">
    <property type="entry name" value="CROSSOVER JUNCTION ENDODEOXYRIBONUCLEASE RUVC"/>
    <property type="match status" value="1"/>
</dbReference>
<dbReference type="Pfam" id="PF02075">
    <property type="entry name" value="RuvC"/>
    <property type="match status" value="1"/>
</dbReference>
<dbReference type="PRINTS" id="PR00696">
    <property type="entry name" value="RSOLVASERUVC"/>
</dbReference>
<dbReference type="SUPFAM" id="SSF53098">
    <property type="entry name" value="Ribonuclease H-like"/>
    <property type="match status" value="1"/>
</dbReference>
<dbReference type="PROSITE" id="PS01321">
    <property type="entry name" value="RUVC"/>
    <property type="match status" value="1"/>
</dbReference>
<gene>
    <name evidence="1" type="primary">ruvC</name>
    <name type="ordered locus">RMA_0166</name>
</gene>
<name>RUVC_RICM5</name>
<reference key="1">
    <citation type="journal article" date="2007" name="Genome Res.">
        <title>Lateral gene transfer between obligate intracellular bacteria: evidence from the Rickettsia massiliae genome.</title>
        <authorList>
            <person name="Blanc G."/>
            <person name="Ogata H."/>
            <person name="Robert C."/>
            <person name="Audic S."/>
            <person name="Claverie J.-M."/>
            <person name="Raoult D."/>
        </authorList>
    </citation>
    <scope>NUCLEOTIDE SEQUENCE [LARGE SCALE GENOMIC DNA]</scope>
    <source>
        <strain>Mtu5</strain>
    </source>
</reference>
<organism>
    <name type="scientific">Rickettsia massiliae (strain Mtu5)</name>
    <dbReference type="NCBI Taxonomy" id="416276"/>
    <lineage>
        <taxon>Bacteria</taxon>
        <taxon>Pseudomonadati</taxon>
        <taxon>Pseudomonadota</taxon>
        <taxon>Alphaproteobacteria</taxon>
        <taxon>Rickettsiales</taxon>
        <taxon>Rickettsiaceae</taxon>
        <taxon>Rickettsieae</taxon>
        <taxon>Rickettsia</taxon>
        <taxon>spotted fever group</taxon>
    </lineage>
</organism>
<feature type="chain" id="PRO_0000332437" description="Crossover junction endodeoxyribonuclease RuvC">
    <location>
        <begin position="1"/>
        <end position="157"/>
    </location>
</feature>
<feature type="active site" evidence="1">
    <location>
        <position position="7"/>
    </location>
</feature>
<feature type="active site" evidence="1">
    <location>
        <position position="67"/>
    </location>
</feature>
<feature type="active site" evidence="1">
    <location>
        <position position="140"/>
    </location>
</feature>
<feature type="binding site" evidence="1">
    <location>
        <position position="7"/>
    </location>
    <ligand>
        <name>Mg(2+)</name>
        <dbReference type="ChEBI" id="CHEBI:18420"/>
        <label>1</label>
    </ligand>
</feature>
<feature type="binding site" evidence="1">
    <location>
        <position position="67"/>
    </location>
    <ligand>
        <name>Mg(2+)</name>
        <dbReference type="ChEBI" id="CHEBI:18420"/>
        <label>2</label>
    </ligand>
</feature>
<feature type="binding site" evidence="1">
    <location>
        <position position="140"/>
    </location>
    <ligand>
        <name>Mg(2+)</name>
        <dbReference type="ChEBI" id="CHEBI:18420"/>
        <label>1</label>
    </ligand>
</feature>
<keyword id="KW-0963">Cytoplasm</keyword>
<keyword id="KW-0227">DNA damage</keyword>
<keyword id="KW-0233">DNA recombination</keyword>
<keyword id="KW-0234">DNA repair</keyword>
<keyword id="KW-0238">DNA-binding</keyword>
<keyword id="KW-0255">Endonuclease</keyword>
<keyword id="KW-0378">Hydrolase</keyword>
<keyword id="KW-0460">Magnesium</keyword>
<keyword id="KW-0479">Metal-binding</keyword>
<keyword id="KW-0540">Nuclease</keyword>
<sequence>MIILGIDPALGSLGWAVVAKETAQLKYLASGIIKTNSKDAIHHRLAFINSTLEKVILEYQPNMAAIEETFVNTNSVTSLKLGYARGAIMSLIGRYNLDMREFKPNTVKKTVTGYGHAEKDQILHMIKLLLPGTFLITNSDEADAVAIAYTCLVTKNY</sequence>
<proteinExistence type="inferred from homology"/>
<comment type="function">
    <text evidence="1">The RuvA-RuvB-RuvC complex processes Holliday junction (HJ) DNA during genetic recombination and DNA repair. Endonuclease that resolves HJ intermediates. Cleaves cruciform DNA by making single-stranded nicks across the HJ at symmetrical positions within the homologous arms, yielding a 5'-phosphate and a 3'-hydroxyl group; requires a central core of homology in the junction. The consensus cleavage sequence is 5'-(A/T)TT(C/G)-3'. Cleavage occurs on the 3'-side of the TT dinucleotide at the point of strand exchange. HJ branch migration catalyzed by RuvA-RuvB allows RuvC to scan DNA until it finds its consensus sequence, where it cleaves and resolves the cruciform DNA.</text>
</comment>
<comment type="catalytic activity">
    <reaction evidence="1">
        <text>Endonucleolytic cleavage at a junction such as a reciprocal single-stranded crossover between two homologous DNA duplexes (Holliday junction).</text>
        <dbReference type="EC" id="3.1.21.10"/>
    </reaction>
</comment>
<comment type="cofactor">
    <cofactor evidence="1">
        <name>Mg(2+)</name>
        <dbReference type="ChEBI" id="CHEBI:18420"/>
    </cofactor>
    <text evidence="1">Binds 2 Mg(2+) ion per subunit.</text>
</comment>
<comment type="subunit">
    <text evidence="1">Homodimer which binds Holliday junction (HJ) DNA. The HJ becomes 2-fold symmetrical on binding to RuvC with unstacked arms; it has a different conformation from HJ DNA in complex with RuvA. In the full resolvosome a probable DNA-RuvA(4)-RuvB(12)-RuvC(2) complex forms which resolves the HJ.</text>
</comment>
<comment type="subcellular location">
    <subcellularLocation>
        <location evidence="1">Cytoplasm</location>
    </subcellularLocation>
</comment>
<comment type="similarity">
    <text evidence="1">Belongs to the RuvC family.</text>
</comment>
<comment type="sequence caution" evidence="2">
    <conflict type="erroneous initiation">
        <sequence resource="EMBL-CDS" id="ABV84460"/>
    </conflict>
    <text>Extended N-terminus.</text>
</comment>